<proteinExistence type="inferred from homology"/>
<gene>
    <name type="primary">PAB1</name>
    <name type="ordered locus">CNI01160</name>
</gene>
<protein>
    <recommendedName>
        <fullName>Polyadenylate-binding protein, cytoplasmic and nuclear</fullName>
        <shortName>PABP</shortName>
        <shortName>Poly(A)-binding protein</shortName>
    </recommendedName>
    <alternativeName>
        <fullName>Polyadenylate tail-binding protein</fullName>
    </alternativeName>
</protein>
<feature type="chain" id="PRO_0000295388" description="Polyadenylate-binding protein, cytoplasmic and nuclear">
    <location>
        <begin position="1"/>
        <end position="673"/>
    </location>
</feature>
<feature type="domain" description="RRM 1" evidence="2">
    <location>
        <begin position="46"/>
        <end position="124"/>
    </location>
</feature>
<feature type="domain" description="RRM 2" evidence="2">
    <location>
        <begin position="134"/>
        <end position="211"/>
    </location>
</feature>
<feature type="domain" description="RRM 3" evidence="2">
    <location>
        <begin position="227"/>
        <end position="304"/>
    </location>
</feature>
<feature type="domain" description="RRM 4" evidence="2">
    <location>
        <begin position="330"/>
        <end position="407"/>
    </location>
</feature>
<feature type="domain" description="PABC" evidence="3">
    <location>
        <begin position="569"/>
        <end position="646"/>
    </location>
</feature>
<feature type="region of interest" description="Disordered" evidence="4">
    <location>
        <begin position="1"/>
        <end position="39"/>
    </location>
</feature>
<feature type="region of interest" description="Disordered" evidence="4">
    <location>
        <begin position="300"/>
        <end position="322"/>
    </location>
</feature>
<feature type="region of interest" description="Disordered" evidence="4">
    <location>
        <begin position="509"/>
        <end position="572"/>
    </location>
</feature>
<feature type="region of interest" description="Disordered" evidence="4">
    <location>
        <begin position="644"/>
        <end position="673"/>
    </location>
</feature>
<feature type="compositionally biased region" description="Basic and acidic residues" evidence="4">
    <location>
        <begin position="304"/>
        <end position="322"/>
    </location>
</feature>
<name>PABP_CRYNJ</name>
<reference key="1">
    <citation type="journal article" date="2005" name="Science">
        <title>The genome of the basidiomycetous yeast and human pathogen Cryptococcus neoformans.</title>
        <authorList>
            <person name="Loftus B.J."/>
            <person name="Fung E."/>
            <person name="Roncaglia P."/>
            <person name="Rowley D."/>
            <person name="Amedeo P."/>
            <person name="Bruno D."/>
            <person name="Vamathevan J."/>
            <person name="Miranda M."/>
            <person name="Anderson I.J."/>
            <person name="Fraser J.A."/>
            <person name="Allen J.E."/>
            <person name="Bosdet I.E."/>
            <person name="Brent M.R."/>
            <person name="Chiu R."/>
            <person name="Doering T.L."/>
            <person name="Donlin M.J."/>
            <person name="D'Souza C.A."/>
            <person name="Fox D.S."/>
            <person name="Grinberg V."/>
            <person name="Fu J."/>
            <person name="Fukushima M."/>
            <person name="Haas B.J."/>
            <person name="Huang J.C."/>
            <person name="Janbon G."/>
            <person name="Jones S.J.M."/>
            <person name="Koo H.L."/>
            <person name="Krzywinski M.I."/>
            <person name="Kwon-Chung K.J."/>
            <person name="Lengeler K.B."/>
            <person name="Maiti R."/>
            <person name="Marra M.A."/>
            <person name="Marra R.E."/>
            <person name="Mathewson C.A."/>
            <person name="Mitchell T.G."/>
            <person name="Pertea M."/>
            <person name="Riggs F.R."/>
            <person name="Salzberg S.L."/>
            <person name="Schein J.E."/>
            <person name="Shvartsbeyn A."/>
            <person name="Shin H."/>
            <person name="Shumway M."/>
            <person name="Specht C.A."/>
            <person name="Suh B.B."/>
            <person name="Tenney A."/>
            <person name="Utterback T.R."/>
            <person name="Wickes B.L."/>
            <person name="Wortman J.R."/>
            <person name="Wye N.H."/>
            <person name="Kronstad J.W."/>
            <person name="Lodge J.K."/>
            <person name="Heitman J."/>
            <person name="Davis R.W."/>
            <person name="Fraser C.M."/>
            <person name="Hyman R.W."/>
        </authorList>
    </citation>
    <scope>NUCLEOTIDE SEQUENCE [LARGE SCALE GENOMIC DNA]</scope>
    <source>
        <strain>JEC21 / ATCC MYA-565</strain>
    </source>
</reference>
<accession>P0CP46</accession>
<accession>Q55NH7</accession>
<accession>Q5KBW2</accession>
<keyword id="KW-0963">Cytoplasm</keyword>
<keyword id="KW-0507">mRNA processing</keyword>
<keyword id="KW-0509">mRNA transport</keyword>
<keyword id="KW-0539">Nucleus</keyword>
<keyword id="KW-1185">Reference proteome</keyword>
<keyword id="KW-0677">Repeat</keyword>
<keyword id="KW-0694">RNA-binding</keyword>
<keyword id="KW-0810">Translation regulation</keyword>
<keyword id="KW-0813">Transport</keyword>
<organism>
    <name type="scientific">Cryptococcus neoformans var. neoformans serotype D (strain JEC21 / ATCC MYA-565)</name>
    <name type="common">Filobasidiella neoformans</name>
    <dbReference type="NCBI Taxonomy" id="214684"/>
    <lineage>
        <taxon>Eukaryota</taxon>
        <taxon>Fungi</taxon>
        <taxon>Dikarya</taxon>
        <taxon>Basidiomycota</taxon>
        <taxon>Agaricomycotina</taxon>
        <taxon>Tremellomycetes</taxon>
        <taxon>Tremellales</taxon>
        <taxon>Cryptococcaceae</taxon>
        <taxon>Cryptococcus</taxon>
        <taxon>Cryptococcus neoformans species complex</taxon>
    </lineage>
</organism>
<evidence type="ECO:0000250" key="1"/>
<evidence type="ECO:0000255" key="2">
    <source>
        <dbReference type="PROSITE-ProRule" id="PRU00176"/>
    </source>
</evidence>
<evidence type="ECO:0000255" key="3">
    <source>
        <dbReference type="PROSITE-ProRule" id="PRU00641"/>
    </source>
</evidence>
<evidence type="ECO:0000256" key="4">
    <source>
        <dbReference type="SAM" id="MobiDB-lite"/>
    </source>
</evidence>
<evidence type="ECO:0000305" key="5"/>
<dbReference type="EMBL" id="AE017349">
    <property type="protein sequence ID" value="AAW45527.1"/>
    <property type="molecule type" value="Genomic_DNA"/>
</dbReference>
<dbReference type="RefSeq" id="XP_572834.1">
    <property type="nucleotide sequence ID" value="XM_572834.1"/>
</dbReference>
<dbReference type="SMR" id="P0CP46"/>
<dbReference type="FunCoup" id="P0CP46">
    <property type="interactions" value="378"/>
</dbReference>
<dbReference type="STRING" id="214684.P0CP46"/>
<dbReference type="PaxDb" id="214684-P0CP46"/>
<dbReference type="EnsemblFungi" id="AAW45527">
    <property type="protein sequence ID" value="AAW45527"/>
    <property type="gene ID" value="CNI01160"/>
</dbReference>
<dbReference type="GeneID" id="3259708"/>
<dbReference type="KEGG" id="cne:CNI01160"/>
<dbReference type="VEuPathDB" id="FungiDB:CNI01160"/>
<dbReference type="eggNOG" id="KOG0123">
    <property type="taxonomic scope" value="Eukaryota"/>
</dbReference>
<dbReference type="HOGENOM" id="CLU_012062_22_4_1"/>
<dbReference type="InParanoid" id="P0CP46"/>
<dbReference type="OMA" id="QQPGFMP"/>
<dbReference type="OrthoDB" id="19742at2759"/>
<dbReference type="Proteomes" id="UP000002149">
    <property type="component" value="Chromosome 9"/>
</dbReference>
<dbReference type="GO" id="GO:0010494">
    <property type="term" value="C:cytoplasmic stress granule"/>
    <property type="evidence" value="ECO:0000318"/>
    <property type="project" value="GO_Central"/>
</dbReference>
<dbReference type="GO" id="GO:0005829">
    <property type="term" value="C:cytosol"/>
    <property type="evidence" value="ECO:0000318"/>
    <property type="project" value="GO_Central"/>
</dbReference>
<dbReference type="GO" id="GO:0005634">
    <property type="term" value="C:nucleus"/>
    <property type="evidence" value="ECO:0000318"/>
    <property type="project" value="GO_Central"/>
</dbReference>
<dbReference type="GO" id="GO:1990904">
    <property type="term" value="C:ribonucleoprotein complex"/>
    <property type="evidence" value="ECO:0000318"/>
    <property type="project" value="GO_Central"/>
</dbReference>
<dbReference type="GO" id="GO:0003730">
    <property type="term" value="F:mRNA 3'-UTR binding"/>
    <property type="evidence" value="ECO:0000318"/>
    <property type="project" value="GO_Central"/>
</dbReference>
<dbReference type="GO" id="GO:0008143">
    <property type="term" value="F:poly(A) binding"/>
    <property type="evidence" value="ECO:0000318"/>
    <property type="project" value="GO_Central"/>
</dbReference>
<dbReference type="GO" id="GO:0008266">
    <property type="term" value="F:poly(U) RNA binding"/>
    <property type="evidence" value="ECO:0000318"/>
    <property type="project" value="GO_Central"/>
</dbReference>
<dbReference type="GO" id="GO:0006397">
    <property type="term" value="P:mRNA processing"/>
    <property type="evidence" value="ECO:0007669"/>
    <property type="project" value="UniProtKB-KW"/>
</dbReference>
<dbReference type="GO" id="GO:0051028">
    <property type="term" value="P:mRNA transport"/>
    <property type="evidence" value="ECO:0007669"/>
    <property type="project" value="UniProtKB-KW"/>
</dbReference>
<dbReference type="GO" id="GO:0006417">
    <property type="term" value="P:regulation of translation"/>
    <property type="evidence" value="ECO:0007669"/>
    <property type="project" value="UniProtKB-KW"/>
</dbReference>
<dbReference type="CDD" id="cd12378">
    <property type="entry name" value="RRM1_I_PABPs"/>
    <property type="match status" value="1"/>
</dbReference>
<dbReference type="CDD" id="cd12379">
    <property type="entry name" value="RRM2_I_PABPs"/>
    <property type="match status" value="1"/>
</dbReference>
<dbReference type="CDD" id="cd12380">
    <property type="entry name" value="RRM3_I_PABPs"/>
    <property type="match status" value="1"/>
</dbReference>
<dbReference type="CDD" id="cd12381">
    <property type="entry name" value="RRM4_I_PABPs"/>
    <property type="match status" value="1"/>
</dbReference>
<dbReference type="FunFam" id="1.10.1900.10:FF:000004">
    <property type="entry name" value="Polyadenylate-binding protein"/>
    <property type="match status" value="1"/>
</dbReference>
<dbReference type="FunFam" id="3.30.70.330:FF:000003">
    <property type="entry name" value="Polyadenylate-binding protein"/>
    <property type="match status" value="1"/>
</dbReference>
<dbReference type="FunFam" id="3.30.70.330:FF:000355">
    <property type="entry name" value="Polyadenylate-binding protein"/>
    <property type="match status" value="1"/>
</dbReference>
<dbReference type="FunFam" id="3.30.70.330:FF:000441">
    <property type="entry name" value="Polyadenylate-binding protein"/>
    <property type="match status" value="1"/>
</dbReference>
<dbReference type="FunFam" id="3.30.70.330:FF:000590">
    <property type="entry name" value="Polyadenylate-binding protein 5"/>
    <property type="match status" value="1"/>
</dbReference>
<dbReference type="Gene3D" id="3.30.70.330">
    <property type="match status" value="4"/>
</dbReference>
<dbReference type="Gene3D" id="1.10.1900.10">
    <property type="entry name" value="c-terminal domain of poly(a) binding protein"/>
    <property type="match status" value="1"/>
</dbReference>
<dbReference type="InterPro" id="IPR012677">
    <property type="entry name" value="Nucleotide-bd_a/b_plait_sf"/>
</dbReference>
<dbReference type="InterPro" id="IPR036053">
    <property type="entry name" value="PABP-dom"/>
</dbReference>
<dbReference type="InterPro" id="IPR006515">
    <property type="entry name" value="PABP_1234"/>
</dbReference>
<dbReference type="InterPro" id="IPR002004">
    <property type="entry name" value="PABP_HYD_C"/>
</dbReference>
<dbReference type="InterPro" id="IPR034364">
    <property type="entry name" value="PABP_RRM1"/>
</dbReference>
<dbReference type="InterPro" id="IPR035979">
    <property type="entry name" value="RBD_domain_sf"/>
</dbReference>
<dbReference type="InterPro" id="IPR045305">
    <property type="entry name" value="RRM2_I_PABPs"/>
</dbReference>
<dbReference type="InterPro" id="IPR000504">
    <property type="entry name" value="RRM_dom"/>
</dbReference>
<dbReference type="NCBIfam" id="TIGR01628">
    <property type="entry name" value="PABP-1234"/>
    <property type="match status" value="1"/>
</dbReference>
<dbReference type="PANTHER" id="PTHR24012">
    <property type="entry name" value="RNA BINDING PROTEIN"/>
    <property type="match status" value="1"/>
</dbReference>
<dbReference type="Pfam" id="PF00658">
    <property type="entry name" value="MLLE"/>
    <property type="match status" value="1"/>
</dbReference>
<dbReference type="Pfam" id="PF00076">
    <property type="entry name" value="RRM_1"/>
    <property type="match status" value="4"/>
</dbReference>
<dbReference type="SMART" id="SM00517">
    <property type="entry name" value="PolyA"/>
    <property type="match status" value="1"/>
</dbReference>
<dbReference type="SMART" id="SM00360">
    <property type="entry name" value="RRM"/>
    <property type="match status" value="4"/>
</dbReference>
<dbReference type="SUPFAM" id="SSF63570">
    <property type="entry name" value="PABC (PABP) domain"/>
    <property type="match status" value="1"/>
</dbReference>
<dbReference type="SUPFAM" id="SSF54928">
    <property type="entry name" value="RNA-binding domain, RBD"/>
    <property type="match status" value="2"/>
</dbReference>
<dbReference type="PROSITE" id="PS51309">
    <property type="entry name" value="PABC"/>
    <property type="match status" value="1"/>
</dbReference>
<dbReference type="PROSITE" id="PS50102">
    <property type="entry name" value="RRM"/>
    <property type="match status" value="4"/>
</dbReference>
<comment type="function">
    <text evidence="1">Binds the poly(A) tail of mRNA. Appears to be an important mediator of the multiple roles of the poly(A) tail in mRNA biogenesis, stability and translation. In the nucleus, involved in both mRNA cleavage and polyadenylation. Is also required for efficient mRNA export to the cytoplasm. Acts in concert with a poly(A)-specific nuclease (PAN) to affect poly(A) tail shortening, which may occur concomitantly with either nucleocytoplasmic mRNA transport or translational initiation. In the cytoplasm, stimulates translation initiation and regulates mRNA decay through translation termination-coupled poly(A) shortening, probably mediated by PAN (By similarity).</text>
</comment>
<comment type="subcellular location">
    <subcellularLocation>
        <location evidence="1">Cytoplasm</location>
    </subcellularLocation>
    <subcellularLocation>
        <location evidence="1">Nucleus</location>
    </subcellularLocation>
</comment>
<comment type="similarity">
    <text evidence="5">Belongs to the polyadenylate-binding protein type-1 family.</text>
</comment>
<sequence length="673" mass="72708">MSAETATSPAPAAETPVAPAPATQTTPAEGAPTPAAAAPGGNTVSASLYVGELDPSVTEAMLFEIFNMIGPVASIRVCRDAVTRRSLGYAYVNYLNAADGERALEHLNYSLIKGQSCRIMWSQRDPALRKTGQGNIFIKNLDQSIDNKALHDTFAAFGDILSCKVGTDENGKSRGFAFVHYSTGEAADAAIKAVNGMLLNDKKVYVGHHVGKKERLSKVEELRAQFTNVYIKNVDLEVTDAEFEDLVKPFGPTISVALSRDEKGVSKGFGFVNYENHESARKAVDELNEKEVNGKKLYAGRAQTKSEREAELKKSHEEKRLENEAKSAGVNLYVKNLDDEWDDDRLRAEFEAFGTITSSKVMRDDSGVSRGFGFVCYSSPDEATKAVSEMNGKMIGTKPLYVALAQRKDVRRQALESQIAQRAQQRMQYGAGFPGMQGYMGQPMYGYPPMPGYGQPMPGMPPVRGPMMGYPGAPQNMMQSRPRFNPNGQPLPGGVPAYGMPPQVPYPGAPGYPVRPGGARIPAAPNANGPRNGGPSPVGAPQGLPAGSIPRGGQMPARPHEQAAPAPQAGRLDAQSLARAAPAEQKQMLGEALYPLIHETQPELAGKITGMLLEMDNAELLHLVESQPALQEKVDEALRVLAEWGKDEKPAADEGAEEPKKEEEETKEEEKKE</sequence>